<gene>
    <name evidence="1" type="primary">mhpC</name>
    <name type="ordered locus">ECED1_0377</name>
</gene>
<name>MHPC_ECO81</name>
<accession>B7MPB6</accession>
<keyword id="KW-0058">Aromatic hydrocarbons catabolism</keyword>
<keyword id="KW-0378">Hydrolase</keyword>
<protein>
    <recommendedName>
        <fullName evidence="1">2-hydroxy-6-oxononadienedioate/2-hydroxy-6-oxononatrienedioate hydrolase</fullName>
        <ecNumber evidence="1">3.7.1.14</ecNumber>
    </recommendedName>
    <alternativeName>
        <fullName evidence="1">2-hydroxy-6-ketonona-2,4-diene-1,9-dioic acid 5,6-hydrolase</fullName>
    </alternativeName>
    <alternativeName>
        <fullName evidence="1">2-hydroxy-6-oxonona-2,4,7-triene-1,9-dioic acid 5,6-hydrolase</fullName>
    </alternativeName>
    <alternativeName>
        <fullName evidence="1">2-hydroxy-6-oxonona-2,4-diene-1,9-dioic acid 5,6-hydrolase</fullName>
    </alternativeName>
</protein>
<evidence type="ECO:0000255" key="1">
    <source>
        <dbReference type="HAMAP-Rule" id="MF_01654"/>
    </source>
</evidence>
<evidence type="ECO:0000305" key="2"/>
<organism>
    <name type="scientific">Escherichia coli O81 (strain ED1a)</name>
    <dbReference type="NCBI Taxonomy" id="585397"/>
    <lineage>
        <taxon>Bacteria</taxon>
        <taxon>Pseudomonadati</taxon>
        <taxon>Pseudomonadota</taxon>
        <taxon>Gammaproteobacteria</taxon>
        <taxon>Enterobacterales</taxon>
        <taxon>Enterobacteriaceae</taxon>
        <taxon>Escherichia</taxon>
    </lineage>
</organism>
<comment type="function">
    <text evidence="1">Catalyzes the cleavage of the C5-C6 bond of 2-hydroxy-6-oxononadienedioate and 2-hydroxy-6-oxononatrienedioate, a dienol ring fission product of the bacterial meta-cleavage pathway for degradation of phenylpropionic acid.</text>
</comment>
<comment type="catalytic activity">
    <reaction evidence="1">
        <text>(2Z,4E)-2-hydroxy-6-oxonona-2,4-dienedioate + H2O = (2Z)-2-hydroxypenta-2,4-dienoate + succinate + H(+)</text>
        <dbReference type="Rhea" id="RHEA:34187"/>
        <dbReference type="ChEBI" id="CHEBI:15377"/>
        <dbReference type="ChEBI" id="CHEBI:15378"/>
        <dbReference type="ChEBI" id="CHEBI:30031"/>
        <dbReference type="ChEBI" id="CHEBI:66887"/>
        <dbReference type="ChEBI" id="CHEBI:67152"/>
        <dbReference type="EC" id="3.7.1.14"/>
    </reaction>
</comment>
<comment type="catalytic activity">
    <reaction evidence="1">
        <text>(2Z,4E,7E)-2-hydroxy-6-oxonona-2,4,7-trienedioate + H2O = (2Z)-2-hydroxypenta-2,4-dienoate + fumarate + H(+)</text>
        <dbReference type="Rhea" id="RHEA:34191"/>
        <dbReference type="ChEBI" id="CHEBI:15377"/>
        <dbReference type="ChEBI" id="CHEBI:15378"/>
        <dbReference type="ChEBI" id="CHEBI:29806"/>
        <dbReference type="ChEBI" id="CHEBI:66888"/>
        <dbReference type="ChEBI" id="CHEBI:67152"/>
        <dbReference type="EC" id="3.7.1.14"/>
    </reaction>
</comment>
<comment type="pathway">
    <text evidence="1">Aromatic compound metabolism; 3-phenylpropanoate degradation.</text>
</comment>
<comment type="subunit">
    <text evidence="1">Homodimer.</text>
</comment>
<comment type="similarity">
    <text evidence="1">Belongs to the AB hydrolase superfamily. MhpC family.</text>
</comment>
<comment type="sequence caution" evidence="2">
    <conflict type="erroneous initiation">
        <sequence resource="EMBL-CDS" id="CAR06588"/>
    </conflict>
    <text>Extended N-terminus.</text>
</comment>
<feature type="chain" id="PRO_1000187014" description="2-hydroxy-6-oxononadienedioate/2-hydroxy-6-oxononatrienedioate hydrolase">
    <location>
        <begin position="1"/>
        <end position="288"/>
    </location>
</feature>
<feature type="active site" description="Proton acceptor" evidence="1">
    <location>
        <position position="267"/>
    </location>
</feature>
<feature type="site" description="Transition state stabilizer" evidence="1">
    <location>
        <position position="114"/>
    </location>
</feature>
<feature type="site" description="Catalytic role in ketonization of the dienol substrate (substrate destabilization)" evidence="1">
    <location>
        <position position="192"/>
    </location>
</feature>
<proteinExistence type="inferred from homology"/>
<reference key="1">
    <citation type="journal article" date="2009" name="PLoS Genet.">
        <title>Organised genome dynamics in the Escherichia coli species results in highly diverse adaptive paths.</title>
        <authorList>
            <person name="Touchon M."/>
            <person name="Hoede C."/>
            <person name="Tenaillon O."/>
            <person name="Barbe V."/>
            <person name="Baeriswyl S."/>
            <person name="Bidet P."/>
            <person name="Bingen E."/>
            <person name="Bonacorsi S."/>
            <person name="Bouchier C."/>
            <person name="Bouvet O."/>
            <person name="Calteau A."/>
            <person name="Chiapello H."/>
            <person name="Clermont O."/>
            <person name="Cruveiller S."/>
            <person name="Danchin A."/>
            <person name="Diard M."/>
            <person name="Dossat C."/>
            <person name="Karoui M.E."/>
            <person name="Frapy E."/>
            <person name="Garry L."/>
            <person name="Ghigo J.M."/>
            <person name="Gilles A.M."/>
            <person name="Johnson J."/>
            <person name="Le Bouguenec C."/>
            <person name="Lescat M."/>
            <person name="Mangenot S."/>
            <person name="Martinez-Jehanne V."/>
            <person name="Matic I."/>
            <person name="Nassif X."/>
            <person name="Oztas S."/>
            <person name="Petit M.A."/>
            <person name="Pichon C."/>
            <person name="Rouy Z."/>
            <person name="Ruf C.S."/>
            <person name="Schneider D."/>
            <person name="Tourret J."/>
            <person name="Vacherie B."/>
            <person name="Vallenet D."/>
            <person name="Medigue C."/>
            <person name="Rocha E.P.C."/>
            <person name="Denamur E."/>
        </authorList>
    </citation>
    <scope>NUCLEOTIDE SEQUENCE [LARGE SCALE GENOMIC DNA]</scope>
    <source>
        <strain>ED1a</strain>
    </source>
</reference>
<dbReference type="EC" id="3.7.1.14" evidence="1"/>
<dbReference type="EMBL" id="CU928162">
    <property type="protein sequence ID" value="CAR06588.1"/>
    <property type="status" value="ALT_INIT"/>
    <property type="molecule type" value="Genomic_DNA"/>
</dbReference>
<dbReference type="RefSeq" id="WP_000121909.1">
    <property type="nucleotide sequence ID" value="NC_011745.1"/>
</dbReference>
<dbReference type="SMR" id="B7MPB6"/>
<dbReference type="ESTHER" id="ecoli-mhpc">
    <property type="family name" value="Carbon-carbon_bond_hydrolase"/>
</dbReference>
<dbReference type="MEROPS" id="S33.995"/>
<dbReference type="KEGG" id="ecq:ECED1_0377"/>
<dbReference type="HOGENOM" id="CLU_020336_13_2_6"/>
<dbReference type="UniPathway" id="UPA00714"/>
<dbReference type="Proteomes" id="UP000000748">
    <property type="component" value="Chromosome"/>
</dbReference>
<dbReference type="GO" id="GO:0005737">
    <property type="term" value="C:cytoplasm"/>
    <property type="evidence" value="ECO:0007669"/>
    <property type="project" value="InterPro"/>
</dbReference>
<dbReference type="GO" id="GO:0052823">
    <property type="term" value="F:2-hydroxy-6-oxonona-2,4,7-trienedioate hydrolase activity"/>
    <property type="evidence" value="ECO:0007669"/>
    <property type="project" value="RHEA"/>
</dbReference>
<dbReference type="GO" id="GO:0018771">
    <property type="term" value="F:2-hydroxy-6-oxonona-2,4-dienedioate hydrolase activity"/>
    <property type="evidence" value="ECO:0007669"/>
    <property type="project" value="UniProtKB-UniRule"/>
</dbReference>
<dbReference type="GO" id="GO:0042803">
    <property type="term" value="F:protein homodimerization activity"/>
    <property type="evidence" value="ECO:0007669"/>
    <property type="project" value="InterPro"/>
</dbReference>
<dbReference type="GO" id="GO:0019380">
    <property type="term" value="P:3-phenylpropionate catabolic process"/>
    <property type="evidence" value="ECO:0007669"/>
    <property type="project" value="UniProtKB-UniRule"/>
</dbReference>
<dbReference type="FunFam" id="3.40.50.1820:FF:000085">
    <property type="entry name" value="2-hydroxy-6-oxononadienedioate/2-hydroxy-6-oxononatrienedioate hydrolase"/>
    <property type="match status" value="1"/>
</dbReference>
<dbReference type="Gene3D" id="3.40.50.1820">
    <property type="entry name" value="alpha/beta hydrolase"/>
    <property type="match status" value="1"/>
</dbReference>
<dbReference type="HAMAP" id="MF_01654">
    <property type="entry name" value="MhpC"/>
    <property type="match status" value="1"/>
</dbReference>
<dbReference type="InterPro" id="IPR000073">
    <property type="entry name" value="AB_hydrolase_1"/>
</dbReference>
<dbReference type="InterPro" id="IPR029058">
    <property type="entry name" value="AB_hydrolase_fold"/>
</dbReference>
<dbReference type="InterPro" id="IPR000639">
    <property type="entry name" value="Epox_hydrolase-like"/>
</dbReference>
<dbReference type="InterPro" id="IPR023791">
    <property type="entry name" value="MhpC_alpha/beta_hydrolase"/>
</dbReference>
<dbReference type="PANTHER" id="PTHR43689:SF8">
    <property type="entry name" value="ALPHA_BETA-HYDROLASES SUPERFAMILY PROTEIN"/>
    <property type="match status" value="1"/>
</dbReference>
<dbReference type="PANTHER" id="PTHR43689">
    <property type="entry name" value="HYDROLASE"/>
    <property type="match status" value="1"/>
</dbReference>
<dbReference type="Pfam" id="PF00561">
    <property type="entry name" value="Abhydrolase_1"/>
    <property type="match status" value="1"/>
</dbReference>
<dbReference type="PRINTS" id="PR00111">
    <property type="entry name" value="ABHYDROLASE"/>
</dbReference>
<dbReference type="PRINTS" id="PR00412">
    <property type="entry name" value="EPOXHYDRLASE"/>
</dbReference>
<dbReference type="SUPFAM" id="SSF53474">
    <property type="entry name" value="alpha/beta-Hydrolases"/>
    <property type="match status" value="1"/>
</dbReference>
<sequence length="288" mass="31910">MSYQPQTEAATSRFLNVEEAGKTLRIHFNDCGQGDETVVLLHGSGPGATGWANFSRNIDPLVKAGYRVILLDCPGWGKSDSIVNSGSRSDLNARILKSVVDQLDIAKIHLLGNSMGGHSSVAFTLNWPERVGKLVLMGGGTGGMSLFTPMPTEGIKRLNQLYRQPTIENLKLMMDIFVFDTSDLTDALFEARLNNMLSRRDHLENFVKSLEANPKQFPDFGPRLAEIKAQTLIVWGRNDRFVPMDAGLRLLSGIAGSELHIFRDCGHWAQWEHADAFNQLVLNFLARA</sequence>